<organism>
    <name type="scientific">Rattus norvegicus</name>
    <name type="common">Rat</name>
    <dbReference type="NCBI Taxonomy" id="10116"/>
    <lineage>
        <taxon>Eukaryota</taxon>
        <taxon>Metazoa</taxon>
        <taxon>Chordata</taxon>
        <taxon>Craniata</taxon>
        <taxon>Vertebrata</taxon>
        <taxon>Euteleostomi</taxon>
        <taxon>Mammalia</taxon>
        <taxon>Eutheria</taxon>
        <taxon>Euarchontoglires</taxon>
        <taxon>Glires</taxon>
        <taxon>Rodentia</taxon>
        <taxon>Myomorpha</taxon>
        <taxon>Muroidea</taxon>
        <taxon>Muridae</taxon>
        <taxon>Murinae</taxon>
        <taxon>Rattus</taxon>
    </lineage>
</organism>
<keyword id="KW-1003">Cell membrane</keyword>
<keyword id="KW-1015">Disulfide bond</keyword>
<keyword id="KW-0297">G-protein coupled receptor</keyword>
<keyword id="KW-0325">Glycoprotein</keyword>
<keyword id="KW-0472">Membrane</keyword>
<keyword id="KW-0675">Receptor</keyword>
<keyword id="KW-1185">Reference proteome</keyword>
<keyword id="KW-0807">Transducer</keyword>
<keyword id="KW-0812">Transmembrane</keyword>
<keyword id="KW-1133">Transmembrane helix</keyword>
<gene>
    <name type="primary">Gpbar1</name>
    <name type="synonym">Tgr5</name>
</gene>
<proteinExistence type="evidence at transcript level"/>
<name>GPBAR_RAT</name>
<evidence type="ECO:0000250" key="1"/>
<evidence type="ECO:0000255" key="2"/>
<evidence type="ECO:0000255" key="3">
    <source>
        <dbReference type="PROSITE-ProRule" id="PRU00521"/>
    </source>
</evidence>
<evidence type="ECO:0000256" key="4">
    <source>
        <dbReference type="SAM" id="MobiDB-lite"/>
    </source>
</evidence>
<feature type="chain" id="PRO_0000069503" description="G-protein coupled bile acid receptor 1">
    <location>
        <begin position="1"/>
        <end position="329"/>
    </location>
</feature>
<feature type="topological domain" description="Extracellular" evidence="2">
    <location>
        <begin position="1"/>
        <end position="18"/>
    </location>
</feature>
<feature type="transmembrane region" description="Helical; Name=1" evidence="2">
    <location>
        <begin position="19"/>
        <end position="39"/>
    </location>
</feature>
<feature type="topological domain" description="Cytoplasmic" evidence="2">
    <location>
        <begin position="40"/>
        <end position="49"/>
    </location>
</feature>
<feature type="transmembrane region" description="Helical; Name=2" evidence="2">
    <location>
        <begin position="50"/>
        <end position="70"/>
    </location>
</feature>
<feature type="topological domain" description="Extracellular" evidence="2">
    <location>
        <begin position="71"/>
        <end position="84"/>
    </location>
</feature>
<feature type="transmembrane region" description="Helical; Name=3" evidence="2">
    <location>
        <begin position="85"/>
        <end position="105"/>
    </location>
</feature>
<feature type="topological domain" description="Cytoplasmic" evidence="2">
    <location>
        <begin position="106"/>
        <end position="124"/>
    </location>
</feature>
<feature type="transmembrane region" description="Helical; Name=4" evidence="2">
    <location>
        <begin position="125"/>
        <end position="145"/>
    </location>
</feature>
<feature type="topological domain" description="Extracellular" evidence="2">
    <location>
        <begin position="146"/>
        <end position="157"/>
    </location>
</feature>
<feature type="transmembrane region" description="Helical; Name=5" evidence="2">
    <location>
        <begin position="158"/>
        <end position="178"/>
    </location>
</feature>
<feature type="topological domain" description="Cytoplasmic" evidence="2">
    <location>
        <begin position="179"/>
        <end position="229"/>
    </location>
</feature>
<feature type="transmembrane region" description="Helical; Name=6" evidence="2">
    <location>
        <begin position="230"/>
        <end position="250"/>
    </location>
</feature>
<feature type="topological domain" description="Extracellular" evidence="2">
    <location>
        <begin position="251"/>
        <end position="260"/>
    </location>
</feature>
<feature type="transmembrane region" description="Helical; Name=7" evidence="2">
    <location>
        <begin position="261"/>
        <end position="281"/>
    </location>
</feature>
<feature type="topological domain" description="Cytoplasmic" evidence="2">
    <location>
        <begin position="282"/>
        <end position="329"/>
    </location>
</feature>
<feature type="region of interest" description="Disordered" evidence="4">
    <location>
        <begin position="306"/>
        <end position="329"/>
    </location>
</feature>
<feature type="compositionally biased region" description="Polar residues" evidence="4">
    <location>
        <begin position="311"/>
        <end position="329"/>
    </location>
</feature>
<feature type="glycosylation site" description="N-linked (GlcNAc...) asparagine" evidence="2">
    <location>
        <position position="5"/>
    </location>
</feature>
<feature type="glycosylation site" description="N-linked (GlcNAc...) asparagine" evidence="2">
    <location>
        <position position="75"/>
    </location>
</feature>
<feature type="glycosylation site" description="N-linked (GlcNAc...) asparagine" evidence="2">
    <location>
        <position position="153"/>
    </location>
</feature>
<feature type="disulfide bond" evidence="3">
    <location>
        <begin position="84"/>
        <end position="154"/>
    </location>
</feature>
<accession>Q80T02</accession>
<protein>
    <recommendedName>
        <fullName>G-protein coupled bile acid receptor 1</fullName>
    </recommendedName>
    <alternativeName>
        <fullName>Membrane-type receptor for bile acids</fullName>
        <shortName>M-BAR</shortName>
    </alternativeName>
</protein>
<comment type="function">
    <text evidence="1">Receptor for bile acid. Bile acid-binding induces its internalization, activation of extracellular signal-regulated kinase and intracellular cAMP production. May be involved in the suppression of macrophage functions by bile acids. Involved in bile acid promoted GLP1R secretion (By similarity).</text>
</comment>
<comment type="subcellular location">
    <subcellularLocation>
        <location evidence="1">Cell membrane</location>
        <topology evidence="1">Multi-pass membrane protein</topology>
    </subcellularLocation>
</comment>
<comment type="similarity">
    <text evidence="3">Belongs to the G-protein coupled receptor 1 family.</text>
</comment>
<sequence>MMSHNTTELSAIPRGVQELSLVLASLIVIANLLLALGIVLDRHLRSPPAGCFFLSLLLAGLLTGLALPTLPGLWNRSHQGYWSCLLLHLAPNFCFLSLLANLLLVHGERYMAVLQPLRPHGSVRLALFLTWISSLLFASLPALGWNHWSPGANCSSQAIFPAPYLYLEVYGLLLPAVGATALLSVRVLATAHHQLREIRRLERAVCRDAPSTLARALTWRQARAQAGATLLFLLCWGPYVATLLLSVLAYERRPPLGPVTLLSLISLGSASAAVVPVAMGLGDQRYTAPWRTAAQRWLQVLRGRPKRANPGPSTAYHSSSQCSTDLDLN</sequence>
<dbReference type="EMBL" id="AB086172">
    <property type="protein sequence ID" value="BAC65345.1"/>
    <property type="molecule type" value="mRNA"/>
</dbReference>
<dbReference type="EMBL" id="AB089310">
    <property type="protein sequence ID" value="BAC55238.1"/>
    <property type="molecule type" value="mRNA"/>
</dbReference>
<dbReference type="RefSeq" id="NP_808797.1">
    <property type="nucleotide sequence ID" value="NM_177936.2"/>
</dbReference>
<dbReference type="RefSeq" id="XP_006245297.1">
    <property type="nucleotide sequence ID" value="XM_006245235.3"/>
</dbReference>
<dbReference type="SMR" id="Q80T02"/>
<dbReference type="FunCoup" id="Q80T02">
    <property type="interactions" value="73"/>
</dbReference>
<dbReference type="STRING" id="10116.ENSRNOP00000075574"/>
<dbReference type="BindingDB" id="Q80T02"/>
<dbReference type="ChEMBL" id="CHEMBL1075223"/>
<dbReference type="GlyCosmos" id="Q80T02">
    <property type="glycosylation" value="3 sites, No reported glycans"/>
</dbReference>
<dbReference type="GlyGen" id="Q80T02">
    <property type="glycosylation" value="3 sites"/>
</dbReference>
<dbReference type="PhosphoSitePlus" id="Q80T02"/>
<dbReference type="Ensembl" id="ENSRNOT00000089698.2">
    <property type="protein sequence ID" value="ENSRNOP00000075574.1"/>
    <property type="gene ID" value="ENSRNOG00000058260.2"/>
</dbReference>
<dbReference type="GeneID" id="338443"/>
<dbReference type="KEGG" id="rno:338443"/>
<dbReference type="UCSC" id="RGD:631400">
    <property type="organism name" value="rat"/>
</dbReference>
<dbReference type="AGR" id="RGD:631400"/>
<dbReference type="CTD" id="151306"/>
<dbReference type="RGD" id="631400">
    <property type="gene designation" value="Gpbar1"/>
</dbReference>
<dbReference type="GeneTree" id="ENSGT00390000010256"/>
<dbReference type="HOGENOM" id="CLU_895831_0_0_1"/>
<dbReference type="InParanoid" id="Q80T02"/>
<dbReference type="OMA" id="ACWVPYL"/>
<dbReference type="OrthoDB" id="8817982at2759"/>
<dbReference type="PhylomeDB" id="Q80T02"/>
<dbReference type="TreeFam" id="TF333321"/>
<dbReference type="Reactome" id="R-RNO-373076">
    <property type="pathway name" value="Class A/1 (Rhodopsin-like receptors)"/>
</dbReference>
<dbReference type="PRO" id="PR:Q80T02"/>
<dbReference type="Proteomes" id="UP000002494">
    <property type="component" value="Chromosome 9"/>
</dbReference>
<dbReference type="Bgee" id="ENSRNOG00000058260">
    <property type="expression patterns" value="Expressed in stomach and 2 other cell types or tissues"/>
</dbReference>
<dbReference type="ExpressionAtlas" id="Q80T02">
    <property type="expression patterns" value="baseline and differential"/>
</dbReference>
<dbReference type="GO" id="GO:0005737">
    <property type="term" value="C:cytoplasm"/>
    <property type="evidence" value="ECO:0000266"/>
    <property type="project" value="RGD"/>
</dbReference>
<dbReference type="GO" id="GO:0005886">
    <property type="term" value="C:plasma membrane"/>
    <property type="evidence" value="ECO:0000266"/>
    <property type="project" value="RGD"/>
</dbReference>
<dbReference type="GO" id="GO:0043235">
    <property type="term" value="C:receptor complex"/>
    <property type="evidence" value="ECO:0000266"/>
    <property type="project" value="RGD"/>
</dbReference>
<dbReference type="GO" id="GO:0038182">
    <property type="term" value="F:G protein-coupled bile acid receptor activity"/>
    <property type="evidence" value="ECO:0000266"/>
    <property type="project" value="RGD"/>
</dbReference>
<dbReference type="GO" id="GO:0004930">
    <property type="term" value="F:G protein-coupled receptor activity"/>
    <property type="evidence" value="ECO:0000314"/>
    <property type="project" value="RGD"/>
</dbReference>
<dbReference type="GO" id="GO:0038184">
    <property type="term" value="P:adenylate cyclase-activating G protein-coupled bile acid receptor signaling pathway"/>
    <property type="evidence" value="ECO:0000266"/>
    <property type="project" value="RGD"/>
</dbReference>
<dbReference type="GO" id="GO:1903413">
    <property type="term" value="P:cellular response to bile acid"/>
    <property type="evidence" value="ECO:0000266"/>
    <property type="project" value="RGD"/>
</dbReference>
<dbReference type="GO" id="GO:0007186">
    <property type="term" value="P:G protein-coupled receptor signaling pathway"/>
    <property type="evidence" value="ECO:0000318"/>
    <property type="project" value="GO_Central"/>
</dbReference>
<dbReference type="GO" id="GO:1904056">
    <property type="term" value="P:positive regulation of cholangiocyte proliferation"/>
    <property type="evidence" value="ECO:0000315"/>
    <property type="project" value="RGD"/>
</dbReference>
<dbReference type="GO" id="GO:0070374">
    <property type="term" value="P:positive regulation of ERK1 and ERK2 cascade"/>
    <property type="evidence" value="ECO:0000315"/>
    <property type="project" value="RGD"/>
</dbReference>
<dbReference type="GO" id="GO:2000810">
    <property type="term" value="P:regulation of bicellular tight junction assembly"/>
    <property type="evidence" value="ECO:0000266"/>
    <property type="project" value="RGD"/>
</dbReference>
<dbReference type="FunFam" id="1.20.1070.10:FF:000307">
    <property type="entry name" value="G-protein coupled bile acid receptor 1"/>
    <property type="match status" value="1"/>
</dbReference>
<dbReference type="Gene3D" id="1.20.1070.10">
    <property type="entry name" value="Rhodopsin 7-helix transmembrane proteins"/>
    <property type="match status" value="1"/>
</dbReference>
<dbReference type="InterPro" id="IPR000276">
    <property type="entry name" value="GPCR_Rhodpsn"/>
</dbReference>
<dbReference type="InterPro" id="IPR017452">
    <property type="entry name" value="GPCR_Rhodpsn_7TM"/>
</dbReference>
<dbReference type="PANTHER" id="PTHR24246:SF31">
    <property type="entry name" value="G-PROTEIN COUPLED BILE ACID RECEPTOR 1"/>
    <property type="match status" value="1"/>
</dbReference>
<dbReference type="PANTHER" id="PTHR24246">
    <property type="entry name" value="OLFACTORY RECEPTOR AND ADENOSINE RECEPTOR"/>
    <property type="match status" value="1"/>
</dbReference>
<dbReference type="Pfam" id="PF00001">
    <property type="entry name" value="7tm_1"/>
    <property type="match status" value="1"/>
</dbReference>
<dbReference type="PRINTS" id="PR00237">
    <property type="entry name" value="GPCRRHODOPSN"/>
</dbReference>
<dbReference type="SUPFAM" id="SSF81321">
    <property type="entry name" value="Family A G protein-coupled receptor-like"/>
    <property type="match status" value="1"/>
</dbReference>
<dbReference type="PROSITE" id="PS50262">
    <property type="entry name" value="G_PROTEIN_RECEP_F1_2"/>
    <property type="match status" value="1"/>
</dbReference>
<reference key="1">
    <citation type="journal article" date="2002" name="Biochem. Biophys. Res. Commun.">
        <title>Identification of membrane-type receptor for bile acids (M-BAR).</title>
        <authorList>
            <person name="Maruyama T."/>
            <person name="Miyamoto Y."/>
            <person name="Nakamura T."/>
            <person name="Tamai Y."/>
            <person name="Okada H."/>
            <person name="Sugiyama E."/>
            <person name="Nakamura T."/>
            <person name="Itadani H."/>
            <person name="Tanaka K."/>
        </authorList>
    </citation>
    <scope>NUCLEOTIDE SEQUENCE [MRNA]</scope>
</reference>
<reference key="2">
    <citation type="journal article" date="2003" name="J. Biol. Chem.">
        <title>A G protein-coupled receptor responsive to bile acids.</title>
        <authorList>
            <person name="Kawamata Y."/>
            <person name="Fujii R."/>
            <person name="Hosoya M."/>
            <person name="Harada M."/>
            <person name="Yoshida H."/>
            <person name="Miwa M."/>
            <person name="Fukusumi S."/>
            <person name="Habata Y."/>
            <person name="Itoh T."/>
            <person name="Shintani Y."/>
            <person name="Hinuma S."/>
            <person name="Fujisawa Y."/>
            <person name="Fujino M."/>
        </authorList>
    </citation>
    <scope>NUCLEOTIDE SEQUENCE [MRNA]</scope>
</reference>